<gene>
    <name type="primary">lhx5</name>
    <name type="synonym">lim5</name>
</gene>
<protein>
    <recommendedName>
        <fullName>LIM/homeobox protein Lhx5</fullName>
        <shortName>LIM homeobox protein 5</shortName>
    </recommendedName>
    <alternativeName>
        <fullName>Homeobox protein LIM-5</fullName>
    </alternativeName>
</protein>
<dbReference type="EMBL" id="L42547">
    <property type="protein sequence ID" value="AAA99465.1"/>
    <property type="molecule type" value="mRNA"/>
</dbReference>
<dbReference type="EMBL" id="BC098523">
    <property type="protein sequence ID" value="AAH98523.1"/>
    <property type="molecule type" value="mRNA"/>
</dbReference>
<dbReference type="RefSeq" id="NP_571293.1">
    <property type="nucleotide sequence ID" value="NM_131218.1"/>
</dbReference>
<dbReference type="SMR" id="P52889"/>
<dbReference type="BioGRID" id="78646">
    <property type="interactions" value="3"/>
</dbReference>
<dbReference type="FunCoup" id="P52889">
    <property type="interactions" value="243"/>
</dbReference>
<dbReference type="STRING" id="7955.ENSDARP00000075139"/>
<dbReference type="PaxDb" id="7955-ENSDARP00000075139"/>
<dbReference type="Ensembl" id="ENSDART00000080693">
    <property type="protein sequence ID" value="ENSDARP00000075139"/>
    <property type="gene ID" value="ENSDARG00000057936"/>
</dbReference>
<dbReference type="GeneID" id="30465"/>
<dbReference type="KEGG" id="dre:30465"/>
<dbReference type="AGR" id="ZFIN:ZDB-GENE-980526-484"/>
<dbReference type="CTD" id="64211"/>
<dbReference type="ZFIN" id="ZDB-GENE-980526-484">
    <property type="gene designation" value="lhx5"/>
</dbReference>
<dbReference type="eggNOG" id="KOG0490">
    <property type="taxonomic scope" value="Eukaryota"/>
</dbReference>
<dbReference type="HOGENOM" id="CLU_027802_3_1_1"/>
<dbReference type="InParanoid" id="P52889"/>
<dbReference type="OMA" id="PSDDQRY"/>
<dbReference type="OrthoDB" id="10068367at2759"/>
<dbReference type="PhylomeDB" id="P52889"/>
<dbReference type="TreeFam" id="TF315442"/>
<dbReference type="PRO" id="PR:P52889"/>
<dbReference type="Proteomes" id="UP000000437">
    <property type="component" value="Alternate scaffold 21"/>
</dbReference>
<dbReference type="Proteomes" id="UP000000437">
    <property type="component" value="Chromosome 21"/>
</dbReference>
<dbReference type="Bgee" id="ENSDARG00000057936">
    <property type="expression patterns" value="Expressed in ventral thalamus and 19 other cell types or tissues"/>
</dbReference>
<dbReference type="GO" id="GO:0005634">
    <property type="term" value="C:nucleus"/>
    <property type="evidence" value="ECO:0000318"/>
    <property type="project" value="GO_Central"/>
</dbReference>
<dbReference type="GO" id="GO:0000981">
    <property type="term" value="F:DNA-binding transcription factor activity, RNA polymerase II-specific"/>
    <property type="evidence" value="ECO:0000318"/>
    <property type="project" value="GO_Central"/>
</dbReference>
<dbReference type="GO" id="GO:0000977">
    <property type="term" value="F:RNA polymerase II transcription regulatory region sequence-specific DNA binding"/>
    <property type="evidence" value="ECO:0000318"/>
    <property type="project" value="GO_Central"/>
</dbReference>
<dbReference type="GO" id="GO:0008270">
    <property type="term" value="F:zinc ion binding"/>
    <property type="evidence" value="ECO:0007669"/>
    <property type="project" value="InterPro"/>
</dbReference>
<dbReference type="GO" id="GO:0001654">
    <property type="term" value="P:eye development"/>
    <property type="evidence" value="ECO:0000316"/>
    <property type="project" value="ZFIN"/>
</dbReference>
<dbReference type="GO" id="GO:0030900">
    <property type="term" value="P:forebrain development"/>
    <property type="evidence" value="ECO:0000314"/>
    <property type="project" value="ZFIN"/>
</dbReference>
<dbReference type="GO" id="GO:0030182">
    <property type="term" value="P:neuron differentiation"/>
    <property type="evidence" value="ECO:0000318"/>
    <property type="project" value="GO_Central"/>
</dbReference>
<dbReference type="GO" id="GO:0006357">
    <property type="term" value="P:regulation of transcription by RNA polymerase II"/>
    <property type="evidence" value="ECO:0000318"/>
    <property type="project" value="GO_Central"/>
</dbReference>
<dbReference type="CDD" id="cd00086">
    <property type="entry name" value="homeodomain"/>
    <property type="match status" value="1"/>
</dbReference>
<dbReference type="CDD" id="cd09367">
    <property type="entry name" value="LIM1_Lhx1_Lhx5"/>
    <property type="match status" value="1"/>
</dbReference>
<dbReference type="CDD" id="cd09375">
    <property type="entry name" value="LIM2_Lhx1_Lhx5"/>
    <property type="match status" value="1"/>
</dbReference>
<dbReference type="FunFam" id="2.10.110.10:FF:000120">
    <property type="entry name" value="Insulin gene enhancer protein ISL-2"/>
    <property type="match status" value="1"/>
</dbReference>
<dbReference type="FunFam" id="1.10.10.60:FF:000075">
    <property type="entry name" value="LIM/homeobox protein Lhx1"/>
    <property type="match status" value="1"/>
</dbReference>
<dbReference type="FunFam" id="2.10.110.10:FF:000046">
    <property type="entry name" value="LIM/homeobox protein Lhx1"/>
    <property type="match status" value="1"/>
</dbReference>
<dbReference type="Gene3D" id="2.10.110.10">
    <property type="entry name" value="Cysteine Rich Protein"/>
    <property type="match status" value="2"/>
</dbReference>
<dbReference type="Gene3D" id="1.10.10.60">
    <property type="entry name" value="Homeodomain-like"/>
    <property type="match status" value="1"/>
</dbReference>
<dbReference type="InterPro" id="IPR001356">
    <property type="entry name" value="HD"/>
</dbReference>
<dbReference type="InterPro" id="IPR017970">
    <property type="entry name" value="Homeobox_CS"/>
</dbReference>
<dbReference type="InterPro" id="IPR009057">
    <property type="entry name" value="Homeodomain-like_sf"/>
</dbReference>
<dbReference type="InterPro" id="IPR049618">
    <property type="entry name" value="Lhx1/5_LIM1"/>
</dbReference>
<dbReference type="InterPro" id="IPR049619">
    <property type="entry name" value="Lhx1/5_LIM2"/>
</dbReference>
<dbReference type="InterPro" id="IPR050453">
    <property type="entry name" value="LIM_Homeobox_TF"/>
</dbReference>
<dbReference type="InterPro" id="IPR001781">
    <property type="entry name" value="Znf_LIM"/>
</dbReference>
<dbReference type="PANTHER" id="PTHR24208">
    <property type="entry name" value="LIM/HOMEOBOX PROTEIN LHX"/>
    <property type="match status" value="1"/>
</dbReference>
<dbReference type="PANTHER" id="PTHR24208:SF115">
    <property type="entry name" value="LIM_HOMEOBOX PROTEIN LHX5"/>
    <property type="match status" value="1"/>
</dbReference>
<dbReference type="Pfam" id="PF00046">
    <property type="entry name" value="Homeodomain"/>
    <property type="match status" value="1"/>
</dbReference>
<dbReference type="Pfam" id="PF00412">
    <property type="entry name" value="LIM"/>
    <property type="match status" value="2"/>
</dbReference>
<dbReference type="SMART" id="SM00389">
    <property type="entry name" value="HOX"/>
    <property type="match status" value="1"/>
</dbReference>
<dbReference type="SMART" id="SM00132">
    <property type="entry name" value="LIM"/>
    <property type="match status" value="2"/>
</dbReference>
<dbReference type="SUPFAM" id="SSF57716">
    <property type="entry name" value="Glucocorticoid receptor-like (DNA-binding domain)"/>
    <property type="match status" value="2"/>
</dbReference>
<dbReference type="SUPFAM" id="SSF46689">
    <property type="entry name" value="Homeodomain-like"/>
    <property type="match status" value="1"/>
</dbReference>
<dbReference type="PROSITE" id="PS00027">
    <property type="entry name" value="HOMEOBOX_1"/>
    <property type="match status" value="1"/>
</dbReference>
<dbReference type="PROSITE" id="PS50071">
    <property type="entry name" value="HOMEOBOX_2"/>
    <property type="match status" value="1"/>
</dbReference>
<dbReference type="PROSITE" id="PS00478">
    <property type="entry name" value="LIM_DOMAIN_1"/>
    <property type="match status" value="2"/>
</dbReference>
<dbReference type="PROSITE" id="PS50023">
    <property type="entry name" value="LIM_DOMAIN_2"/>
    <property type="match status" value="2"/>
</dbReference>
<organism>
    <name type="scientific">Danio rerio</name>
    <name type="common">Zebrafish</name>
    <name type="synonym">Brachydanio rerio</name>
    <dbReference type="NCBI Taxonomy" id="7955"/>
    <lineage>
        <taxon>Eukaryota</taxon>
        <taxon>Metazoa</taxon>
        <taxon>Chordata</taxon>
        <taxon>Craniata</taxon>
        <taxon>Vertebrata</taxon>
        <taxon>Euteleostomi</taxon>
        <taxon>Actinopterygii</taxon>
        <taxon>Neopterygii</taxon>
        <taxon>Teleostei</taxon>
        <taxon>Ostariophysi</taxon>
        <taxon>Cypriniformes</taxon>
        <taxon>Danionidae</taxon>
        <taxon>Danioninae</taxon>
        <taxon>Danio</taxon>
    </lineage>
</organism>
<sequence>MMVHCAGCERPILDRFLLNVLDRAWHAKCVQCCECNCNLTEKCFSRDGKLYCKIDFFRRFGTKCAGCLQGISPSDLVRRARSKVFHLNCFTCMVCNKQLSTGEELYVIDENKFVCKEDYLSASAIKEVNLNSVSSCTDRSLSPDLPDQIQDDTKETDNSTSSDKDTNNNENEEQNSCTKRRGPRTTIKAKQLETLKAAFVATPKPTRHIREQLAQETGLNMRVIQVWFQNRRSKERRMKQLSALGARRHAFFRGPRRMRPLGGRLEDPDIMGPGGYSYYGEYQGDYYGPVVNYDFFPHGPPSSQAHSPAESPYLLSSGSGALEGGPVSAHHPSDDQRFTDMISHADTPSPEPGMTGPLHSNPQGEGGFTGSPPFPLANNTSYSGPMSHPGQEMGENTVW</sequence>
<proteinExistence type="evidence at transcript level"/>
<reference key="1">
    <citation type="journal article" date="1995" name="Dev. Biol.">
        <title>The LIM class homeobox gene lim5: implied role in CNS patterning in Xenopus and zebrafish.</title>
        <authorList>
            <person name="Toyama R."/>
            <person name="Curtiss P.E."/>
            <person name="Otani H."/>
            <person name="Kimura M."/>
            <person name="Dawid I.B."/>
            <person name="Taira M."/>
        </authorList>
    </citation>
    <scope>NUCLEOTIDE SEQUENCE [MRNA]</scope>
</reference>
<reference key="2">
    <citation type="submission" date="2005-07" db="EMBL/GenBank/DDBJ databases">
        <authorList>
            <consortium name="NIH - Zebrafish Gene Collection (ZGC) project"/>
        </authorList>
    </citation>
    <scope>NUCLEOTIDE SEQUENCE [LARGE SCALE MRNA]</scope>
    <source>
        <tissue>Embryo</tissue>
    </source>
</reference>
<keyword id="KW-0217">Developmental protein</keyword>
<keyword id="KW-0238">DNA-binding</keyword>
<keyword id="KW-0371">Homeobox</keyword>
<keyword id="KW-0440">LIM domain</keyword>
<keyword id="KW-0479">Metal-binding</keyword>
<keyword id="KW-0539">Nucleus</keyword>
<keyword id="KW-1185">Reference proteome</keyword>
<keyword id="KW-0677">Repeat</keyword>
<keyword id="KW-0804">Transcription</keyword>
<keyword id="KW-0805">Transcription regulation</keyword>
<keyword id="KW-0862">Zinc</keyword>
<accession>P52889</accession>
<accession>Q4KMK6</accession>
<name>LHX5_DANRE</name>
<evidence type="ECO:0000255" key="1">
    <source>
        <dbReference type="PROSITE-ProRule" id="PRU00108"/>
    </source>
</evidence>
<evidence type="ECO:0000255" key="2">
    <source>
        <dbReference type="PROSITE-ProRule" id="PRU00125"/>
    </source>
</evidence>
<evidence type="ECO:0000256" key="3">
    <source>
        <dbReference type="SAM" id="MobiDB-lite"/>
    </source>
</evidence>
<evidence type="ECO:0000305" key="4"/>
<comment type="function">
    <text>Probably involved in the patterning of the nervous system, in particular in the early specification of the diencephalon.</text>
</comment>
<comment type="subcellular location">
    <subcellularLocation>
        <location evidence="4">Nucleus</location>
    </subcellularLocation>
</comment>
<feature type="chain" id="PRO_0000075792" description="LIM/homeobox protein Lhx5">
    <location>
        <begin position="1"/>
        <end position="399"/>
    </location>
</feature>
<feature type="domain" description="LIM zinc-binding 1" evidence="2">
    <location>
        <begin position="3"/>
        <end position="61"/>
    </location>
</feature>
<feature type="domain" description="LIM zinc-binding 2" evidence="2">
    <location>
        <begin position="62"/>
        <end position="125"/>
    </location>
</feature>
<feature type="DNA-binding region" description="Homeobox" evidence="1">
    <location>
        <begin position="180"/>
        <end position="239"/>
    </location>
</feature>
<feature type="region of interest" description="Disordered" evidence="3">
    <location>
        <begin position="136"/>
        <end position="185"/>
    </location>
</feature>
<feature type="region of interest" description="Disordered" evidence="3">
    <location>
        <begin position="301"/>
        <end position="399"/>
    </location>
</feature>
<feature type="compositionally biased region" description="Basic and acidic residues" evidence="3">
    <location>
        <begin position="151"/>
        <end position="167"/>
    </location>
</feature>